<organism>
    <name type="scientific">Trichophyton tonsurans (strain CBS 112818)</name>
    <name type="common">Scalp ringworm fungus</name>
    <dbReference type="NCBI Taxonomy" id="647933"/>
    <lineage>
        <taxon>Eukaryota</taxon>
        <taxon>Fungi</taxon>
        <taxon>Dikarya</taxon>
        <taxon>Ascomycota</taxon>
        <taxon>Pezizomycotina</taxon>
        <taxon>Eurotiomycetes</taxon>
        <taxon>Eurotiomycetidae</taxon>
        <taxon>Onygenales</taxon>
        <taxon>Arthrodermataceae</taxon>
        <taxon>Trichophyton</taxon>
    </lineage>
</organism>
<accession>F2S700</accession>
<sequence length="436" mass="49052">MTSVPIFESVSRFLPPANEDEQYWWKITGQHMARMMHEAGYPEDRQVECLLFHRFKVIPCLGPRPRSDTPWYKSRVGGGAADGCPINYSWRFGTADRKPHIRNFIEPLGALTNTPADPLNEVATKALLQDYSMTLPNVDLEAFWTFAPHYRPRIIEKADIEKLAGASLLVGAEMSPDSYTIDIKAYMYPRVPSQTSQLLTTILPQAMRDAYGENVCLDSLNFVHEFMTKDPQGSQLVLTGTTGIDCCKLQDTRVKIYVITRNTSFDHIAAIMTLGGRRPISEELLGQLKALWYELKGAPAELPSSEQLPVQTKPDGSKNPIVVPFYFDIQPRLALPDVKAYIDVSTSPVSDLAAANAVVRHLEQHGSGQNPKAYLNVLKDITPVEELETQKGVLAFYSVAVKKNELDITSYFNPQVYKRYFAHEVHLNGQRRSVFE</sequence>
<name>NSCD_TRIT1</name>
<proteinExistence type="inferred from homology"/>
<dbReference type="EC" id="2.5.1.-" evidence="6"/>
<dbReference type="EMBL" id="GG698521">
    <property type="protein sequence ID" value="EGD99349.1"/>
    <property type="molecule type" value="Genomic_DNA"/>
</dbReference>
<dbReference type="SMR" id="F2S700"/>
<dbReference type="HOGENOM" id="CLU_037431_2_2_1"/>
<dbReference type="OrthoDB" id="472at34384"/>
<dbReference type="Proteomes" id="UP000009172">
    <property type="component" value="Unassembled WGS sequence"/>
</dbReference>
<dbReference type="GO" id="GO:0004659">
    <property type="term" value="F:prenyltransferase activity"/>
    <property type="evidence" value="ECO:0007669"/>
    <property type="project" value="TreeGrafter"/>
</dbReference>
<dbReference type="GO" id="GO:0009820">
    <property type="term" value="P:alkaloid metabolic process"/>
    <property type="evidence" value="ECO:0007669"/>
    <property type="project" value="InterPro"/>
</dbReference>
<dbReference type="CDD" id="cd13929">
    <property type="entry name" value="PT-DMATS_CymD"/>
    <property type="match status" value="1"/>
</dbReference>
<dbReference type="InterPro" id="IPR033964">
    <property type="entry name" value="Aro_prenylTrfase"/>
</dbReference>
<dbReference type="InterPro" id="IPR017795">
    <property type="entry name" value="Aro_prenylTrfase_DMATS"/>
</dbReference>
<dbReference type="NCBIfam" id="TIGR03429">
    <property type="entry name" value="arom_pren_DMATS"/>
    <property type="match status" value="1"/>
</dbReference>
<dbReference type="PANTHER" id="PTHR40627">
    <property type="entry name" value="INDOLE PRENYLTRANSFERASE TDIB-RELATED"/>
    <property type="match status" value="1"/>
</dbReference>
<dbReference type="PANTHER" id="PTHR40627:SF4">
    <property type="entry name" value="PRENYLTRANSFERASE ASQH1-RELATED"/>
    <property type="match status" value="1"/>
</dbReference>
<dbReference type="Pfam" id="PF11991">
    <property type="entry name" value="Trp_DMAT"/>
    <property type="match status" value="1"/>
</dbReference>
<dbReference type="SFLD" id="SFLDS00036">
    <property type="entry name" value="Aromatic_Prenyltransferase"/>
    <property type="match status" value="1"/>
</dbReference>
<gene>
    <name evidence="3" type="primary">nscD</name>
    <name type="ORF">TESG_06703</name>
</gene>
<feature type="chain" id="PRO_0000437917" description="Prenyltransferase nscD">
    <location>
        <begin position="1"/>
        <end position="436"/>
    </location>
</feature>
<keyword id="KW-0808">Transferase</keyword>
<reference key="1">
    <citation type="journal article" date="2012" name="MBio">
        <title>Comparative genome analysis of Trichophyton rubrum and related dermatophytes reveals candidate genes involved in infection.</title>
        <authorList>
            <person name="Martinez D.A."/>
            <person name="Oliver B.G."/>
            <person name="Graeser Y."/>
            <person name="Goldberg J.M."/>
            <person name="Li W."/>
            <person name="Martinez-Rossi N.M."/>
            <person name="Monod M."/>
            <person name="Shelest E."/>
            <person name="Barton R.C."/>
            <person name="Birch E."/>
            <person name="Brakhage A.A."/>
            <person name="Chen Z."/>
            <person name="Gurr S.J."/>
            <person name="Heiman D."/>
            <person name="Heitman J."/>
            <person name="Kosti I."/>
            <person name="Rossi A."/>
            <person name="Saif S."/>
            <person name="Samalova M."/>
            <person name="Saunders C.W."/>
            <person name="Shea T."/>
            <person name="Summerbell R.C."/>
            <person name="Xu J."/>
            <person name="Young S."/>
            <person name="Zeng Q."/>
            <person name="Birren B.W."/>
            <person name="Cuomo C.A."/>
            <person name="White T.C."/>
        </authorList>
    </citation>
    <scope>NUCLEOTIDE SEQUENCE [LARGE SCALE GENOMIC DNA]</scope>
    <source>
        <strain>CBS 112818</strain>
    </source>
</reference>
<reference key="2">
    <citation type="journal article" date="2013" name="ACS Synth. Biol.">
        <title>Discovery of cryptic polyketide metabolites from dermatophytes using heterologous expression in Aspergillus nidulans.</title>
        <authorList>
            <person name="Yin W.B."/>
            <person name="Chooi Y.H."/>
            <person name="Smith A.R."/>
            <person name="Cacho R.A."/>
            <person name="Hu Y."/>
            <person name="White T.C."/>
            <person name="Tang Y."/>
        </authorList>
    </citation>
    <scope>FUNCTION</scope>
</reference>
<reference key="3">
    <citation type="journal article" date="2013" name="Org. Lett.">
        <title>Genome mining of a prenylated and immunosuppressive polyketide from pathogenic fungi.</title>
        <authorList>
            <person name="Chooi Y.H."/>
            <person name="Fang J."/>
            <person name="Liu H."/>
            <person name="Filler S.G."/>
            <person name="Wang P."/>
            <person name="Tang Y."/>
        </authorList>
    </citation>
    <scope>FUNCTION</scope>
</reference>
<protein>
    <recommendedName>
        <fullName evidence="3">Prenyltransferase nscD</fullName>
        <ecNumber evidence="6">2.5.1.-</ecNumber>
    </recommendedName>
    <alternativeName>
        <fullName evidence="3">Neosartoricin B biosynthesis protein D</fullName>
    </alternativeName>
</protein>
<comment type="function">
    <text evidence="1 2 5">Prenyltransferase; part of the gene cluster that mediates the biosynthesis of neosartoricin B, a prenylated anthracenone that probably exhibits T-cell antiproliferative activity, suggestive of a physiological role as an immunosuppressive agent (PubMed:23368997, PubMed:23758576). The non-reducing polyketide synthase nscA probably synthesizes and cyclizes the decaketide backbone (By similarity). The hydrolase nscB then mediates the product release through hydrolysis followed by spontaneous decarboxylation (By similarity). The prenyltransferase nscD catalyzes the addition of the dimethylallyl group to the aromatic C5 (By similarity). The FAD-dependent monooxygenase nscC is then responsible for the stereospecific hydroxylation at C2 (By similarity). Neosartoricin B can be converted into two additional compounds neosartoricins C and D (PubMed:23758576). Neosartoricin C is a spirocyclic compound that is cyclized through the attack of C3 hydroxyl on C14, followed by dehydration (PubMed:23758576). On the other hand, neosartoricin D is a further cyclized compound in which attack of C2 on C14 in neosartoricin C results in the formation of the acetal-containing dioxabicyclo-octanone ring (PubMed:23758576). Both of these compounds are novel and possibly represent related metabolites of the gene cluster (PubMed:23758576).</text>
</comment>
<comment type="pathway">
    <text evidence="2">Secondary metabolite biosynthesis.</text>
</comment>
<comment type="similarity">
    <text evidence="4">Belongs to the tryptophan dimethylallyltransferase family.</text>
</comment>
<evidence type="ECO:0000250" key="1">
    <source>
        <dbReference type="UniProtKB" id="A1D8I8"/>
    </source>
</evidence>
<evidence type="ECO:0000269" key="2">
    <source>
    </source>
</evidence>
<evidence type="ECO:0000303" key="3">
    <source>
    </source>
</evidence>
<evidence type="ECO:0000305" key="4"/>
<evidence type="ECO:0000305" key="5">
    <source>
    </source>
</evidence>
<evidence type="ECO:0000305" key="6">
    <source>
    </source>
</evidence>